<dbReference type="EC" id="2.7.2.3"/>
<dbReference type="EMBL" id="X54519">
    <property type="protein sequence ID" value="CAA38375.1"/>
    <property type="molecule type" value="Genomic_DNA"/>
</dbReference>
<dbReference type="EMBL" id="M87647">
    <property type="protein sequence ID" value="AAA73203.1"/>
    <property type="molecule type" value="Genomic_DNA"/>
</dbReference>
<dbReference type="EMBL" id="M87648">
    <property type="protein sequence ID" value="AAA73206.1"/>
    <property type="molecule type" value="Genomic_DNA"/>
</dbReference>
<dbReference type="EMBL" id="CP001982">
    <property type="protein sequence ID" value="ADF41837.1"/>
    <property type="molecule type" value="Genomic_DNA"/>
</dbReference>
<dbReference type="PIR" id="S13125">
    <property type="entry name" value="KIBSGM"/>
</dbReference>
<dbReference type="RefSeq" id="WP_013059701.1">
    <property type="nucleotide sequence ID" value="NZ_CP120609.1"/>
</dbReference>
<dbReference type="SMR" id="P24269"/>
<dbReference type="KEGG" id="bmd:BMD_5037"/>
<dbReference type="HOGENOM" id="CLU_025427_0_2_9"/>
<dbReference type="UniPathway" id="UPA00109">
    <property type="reaction ID" value="UER00185"/>
</dbReference>
<dbReference type="Proteomes" id="UP000002365">
    <property type="component" value="Chromosome"/>
</dbReference>
<dbReference type="GO" id="GO:0005829">
    <property type="term" value="C:cytosol"/>
    <property type="evidence" value="ECO:0007669"/>
    <property type="project" value="TreeGrafter"/>
</dbReference>
<dbReference type="GO" id="GO:0043531">
    <property type="term" value="F:ADP binding"/>
    <property type="evidence" value="ECO:0007669"/>
    <property type="project" value="TreeGrafter"/>
</dbReference>
<dbReference type="GO" id="GO:0005524">
    <property type="term" value="F:ATP binding"/>
    <property type="evidence" value="ECO:0007669"/>
    <property type="project" value="UniProtKB-KW"/>
</dbReference>
<dbReference type="GO" id="GO:0004618">
    <property type="term" value="F:phosphoglycerate kinase activity"/>
    <property type="evidence" value="ECO:0007669"/>
    <property type="project" value="UniProtKB-UniRule"/>
</dbReference>
<dbReference type="GO" id="GO:0006094">
    <property type="term" value="P:gluconeogenesis"/>
    <property type="evidence" value="ECO:0007669"/>
    <property type="project" value="TreeGrafter"/>
</dbReference>
<dbReference type="GO" id="GO:0006096">
    <property type="term" value="P:glycolytic process"/>
    <property type="evidence" value="ECO:0007669"/>
    <property type="project" value="UniProtKB-UniRule"/>
</dbReference>
<dbReference type="CDD" id="cd00318">
    <property type="entry name" value="Phosphoglycerate_kinase"/>
    <property type="match status" value="1"/>
</dbReference>
<dbReference type="FunFam" id="3.40.50.1260:FF:000001">
    <property type="entry name" value="Phosphoglycerate kinase"/>
    <property type="match status" value="1"/>
</dbReference>
<dbReference type="FunFam" id="3.40.50.1260:FF:000002">
    <property type="entry name" value="Phosphoglycerate kinase"/>
    <property type="match status" value="1"/>
</dbReference>
<dbReference type="Gene3D" id="3.40.50.1260">
    <property type="entry name" value="Phosphoglycerate kinase, N-terminal domain"/>
    <property type="match status" value="2"/>
</dbReference>
<dbReference type="HAMAP" id="MF_00145">
    <property type="entry name" value="Phosphoglyc_kinase"/>
    <property type="match status" value="1"/>
</dbReference>
<dbReference type="InterPro" id="IPR001576">
    <property type="entry name" value="Phosphoglycerate_kinase"/>
</dbReference>
<dbReference type="InterPro" id="IPR015911">
    <property type="entry name" value="Phosphoglycerate_kinase_CS"/>
</dbReference>
<dbReference type="InterPro" id="IPR015824">
    <property type="entry name" value="Phosphoglycerate_kinase_N"/>
</dbReference>
<dbReference type="InterPro" id="IPR036043">
    <property type="entry name" value="Phosphoglycerate_kinase_sf"/>
</dbReference>
<dbReference type="PANTHER" id="PTHR11406">
    <property type="entry name" value="PHOSPHOGLYCERATE KINASE"/>
    <property type="match status" value="1"/>
</dbReference>
<dbReference type="PANTHER" id="PTHR11406:SF23">
    <property type="entry name" value="PHOSPHOGLYCERATE KINASE 1, CHLOROPLASTIC-RELATED"/>
    <property type="match status" value="1"/>
</dbReference>
<dbReference type="Pfam" id="PF00162">
    <property type="entry name" value="PGK"/>
    <property type="match status" value="1"/>
</dbReference>
<dbReference type="PIRSF" id="PIRSF000724">
    <property type="entry name" value="Pgk"/>
    <property type="match status" value="1"/>
</dbReference>
<dbReference type="PRINTS" id="PR00477">
    <property type="entry name" value="PHGLYCKINASE"/>
</dbReference>
<dbReference type="SUPFAM" id="SSF53748">
    <property type="entry name" value="Phosphoglycerate kinase"/>
    <property type="match status" value="1"/>
</dbReference>
<dbReference type="PROSITE" id="PS00111">
    <property type="entry name" value="PGLYCERATE_KINASE"/>
    <property type="match status" value="1"/>
</dbReference>
<name>PGK_PRIM3</name>
<proteinExistence type="inferred from homology"/>
<feature type="chain" id="PRO_0000145903" description="Phosphoglycerate kinase">
    <location>
        <begin position="1"/>
        <end position="394"/>
    </location>
</feature>
<feature type="binding site" evidence="1">
    <location>
        <begin position="21"/>
        <end position="23"/>
    </location>
    <ligand>
        <name>substrate</name>
    </ligand>
</feature>
<feature type="binding site" evidence="1">
    <location>
        <position position="36"/>
    </location>
    <ligand>
        <name>substrate</name>
    </ligand>
</feature>
<feature type="binding site" evidence="1">
    <location>
        <begin position="59"/>
        <end position="62"/>
    </location>
    <ligand>
        <name>substrate</name>
    </ligand>
</feature>
<feature type="binding site" evidence="1">
    <location>
        <position position="118"/>
    </location>
    <ligand>
        <name>substrate</name>
    </ligand>
</feature>
<feature type="binding site" evidence="1">
    <location>
        <position position="151"/>
    </location>
    <ligand>
        <name>substrate</name>
    </ligand>
</feature>
<feature type="binding site" evidence="1">
    <location>
        <position position="201"/>
    </location>
    <ligand>
        <name>ATP</name>
        <dbReference type="ChEBI" id="CHEBI:30616"/>
    </ligand>
</feature>
<feature type="binding site" evidence="1">
    <location>
        <position position="292"/>
    </location>
    <ligand>
        <name>ATP</name>
        <dbReference type="ChEBI" id="CHEBI:30616"/>
    </ligand>
</feature>
<feature type="binding site" evidence="1">
    <location>
        <position position="323"/>
    </location>
    <ligand>
        <name>ATP</name>
        <dbReference type="ChEBI" id="CHEBI:30616"/>
    </ligand>
</feature>
<feature type="binding site" evidence="1">
    <location>
        <begin position="350"/>
        <end position="353"/>
    </location>
    <ligand>
        <name>ATP</name>
        <dbReference type="ChEBI" id="CHEBI:30616"/>
    </ligand>
</feature>
<feature type="modified residue" description="Phosphoserine" evidence="1">
    <location>
        <position position="183"/>
    </location>
</feature>
<feature type="modified residue" description="Phosphothreonine" evidence="1">
    <location>
        <position position="299"/>
    </location>
</feature>
<sequence>MNKKTLKDIDVKGKRVFCRVDFNVPMKDGKVTDETRIRAAIPTIQYLVEQGAKVILASHLGRPKGEVVEELRLNAVAERLQALLGKDVAKADEAFGEEVKKTIDGMSEGDVLVLENVRFYPGEEKNDPELAKAFAELADVYVNDAFGAAHRAHASTEGIAQHIPAVAGFLMEKELDVLSKALSNPERPFTAIVGGAKVKDKIGVIDHLLDKVDNLIIGGGLSYTFIKALGHEVGKSLLEEDKIELAKSFMEKAKKNGVNFYMPVDVVVADDFSNDANIQVVSIEDIPSDWEGLDAGPKTREIYADVIKNSKLVIWNGPMGVFELDAFANGTKAVAEALAEATDTYSVIGGGDSAAAVEKFNLADKMSHISTGGGASLEFMEGKELPGVVALNDK</sequence>
<accession>P24269</accession>
<accession>D5DNB0</accession>
<gene>
    <name type="primary">pgk</name>
    <name type="ordered locus">BMD_5037</name>
</gene>
<evidence type="ECO:0000250" key="1"/>
<evidence type="ECO:0000305" key="2"/>
<protein>
    <recommendedName>
        <fullName>Phosphoglycerate kinase</fullName>
        <ecNumber>2.7.2.3</ecNumber>
    </recommendedName>
</protein>
<organism>
    <name type="scientific">Priestia megaterium (strain DSM 319 / IMG 1521)</name>
    <name type="common">Bacillus megaterium</name>
    <dbReference type="NCBI Taxonomy" id="592022"/>
    <lineage>
        <taxon>Bacteria</taxon>
        <taxon>Bacillati</taxon>
        <taxon>Bacillota</taxon>
        <taxon>Bacilli</taxon>
        <taxon>Bacillales</taxon>
        <taxon>Bacillaceae</taxon>
        <taxon>Priestia</taxon>
    </lineage>
</organism>
<keyword id="KW-0067">ATP-binding</keyword>
<keyword id="KW-0963">Cytoplasm</keyword>
<keyword id="KW-0324">Glycolysis</keyword>
<keyword id="KW-0418">Kinase</keyword>
<keyword id="KW-0547">Nucleotide-binding</keyword>
<keyword id="KW-0597">Phosphoprotein</keyword>
<keyword id="KW-0808">Transferase</keyword>
<reference key="1">
    <citation type="journal article" date="1990" name="Nucleic Acids Res.">
        <title>Nucleotide sequence of the phosphoglycerate kinase gene from Bacillus megaterium.</title>
        <authorList>
            <person name="Schlaepfer B.S."/>
            <person name="Branlant C."/>
            <person name="Branlant G."/>
            <person name="Zuber H."/>
        </authorList>
    </citation>
    <scope>NUCLEOTIDE SEQUENCE [GENOMIC DNA]</scope>
</reference>
<reference key="2">
    <citation type="journal article" date="1992" name="Gene">
        <title>Cloning and sequencing of the genes encoding glyceraldehyde-3-phosphate dehydrogenase, phosphoglycerate kinase and triosephosphate isomerase (gap operon) from mesophilic Bacillus megaterium: comparison with corresponding sequences from thermophilic Bacillus stearothermophilus.</title>
        <authorList>
            <person name="Schlaepfer B.S."/>
            <person name="Zuber H."/>
        </authorList>
    </citation>
    <scope>NUCLEOTIDE SEQUENCE [GENOMIC DNA]</scope>
</reference>
<reference key="3">
    <citation type="journal article" date="2011" name="J. Bacteriol.">
        <title>Genome sequences of the biotechnologically important Bacillus megaterium strains QM B1551 and DSM319.</title>
        <authorList>
            <person name="Eppinger M."/>
            <person name="Bunk B."/>
            <person name="Johns M.A."/>
            <person name="Edirisinghe J.N."/>
            <person name="Kutumbaka K.K."/>
            <person name="Koenig S.S."/>
            <person name="Creasy H.H."/>
            <person name="Rosovitz M.J."/>
            <person name="Riley D.R."/>
            <person name="Daugherty S."/>
            <person name="Martin M."/>
            <person name="Elbourne L.D."/>
            <person name="Paulsen I."/>
            <person name="Biedendieck R."/>
            <person name="Braun C."/>
            <person name="Grayburn S."/>
            <person name="Dhingra S."/>
            <person name="Lukyanchuk V."/>
            <person name="Ball B."/>
            <person name="Ul-Qamar R."/>
            <person name="Seibel J."/>
            <person name="Bremer E."/>
            <person name="Jahn D."/>
            <person name="Ravel J."/>
            <person name="Vary P.S."/>
        </authorList>
    </citation>
    <scope>NUCLEOTIDE SEQUENCE [LARGE SCALE GENOMIC DNA]</scope>
    <source>
        <strain>DSM 319 / IMG 1521</strain>
    </source>
</reference>
<comment type="catalytic activity">
    <reaction>
        <text>(2R)-3-phosphoglycerate + ATP = (2R)-3-phospho-glyceroyl phosphate + ADP</text>
        <dbReference type="Rhea" id="RHEA:14801"/>
        <dbReference type="ChEBI" id="CHEBI:30616"/>
        <dbReference type="ChEBI" id="CHEBI:57604"/>
        <dbReference type="ChEBI" id="CHEBI:58272"/>
        <dbReference type="ChEBI" id="CHEBI:456216"/>
        <dbReference type="EC" id="2.7.2.3"/>
    </reaction>
</comment>
<comment type="pathway">
    <text>Carbohydrate degradation; glycolysis; pyruvate from D-glyceraldehyde 3-phosphate: step 2/5.</text>
</comment>
<comment type="subunit">
    <text>Monomer.</text>
</comment>
<comment type="subcellular location">
    <subcellularLocation>
        <location>Cytoplasm</location>
    </subcellularLocation>
</comment>
<comment type="similarity">
    <text evidence="2">Belongs to the phosphoglycerate kinase family.</text>
</comment>